<protein>
    <recommendedName>
        <fullName>Ras guanine nucleotide exchange factor G</fullName>
    </recommendedName>
    <alternativeName>
        <fullName>RasGEF domain-containing protein G</fullName>
    </alternativeName>
</protein>
<feature type="chain" id="PRO_0000384465" description="Ras guanine nucleotide exchange factor G">
    <location>
        <begin position="1"/>
        <end position="1556"/>
    </location>
</feature>
<feature type="domain" description="F-box 1" evidence="2">
    <location>
        <begin position="307"/>
        <end position="353"/>
    </location>
</feature>
<feature type="domain" description="F-box 2" evidence="2">
    <location>
        <begin position="679"/>
        <end position="726"/>
    </location>
</feature>
<feature type="domain" description="N-terminal Ras-GEF" evidence="3">
    <location>
        <begin position="1116"/>
        <end position="1244"/>
    </location>
</feature>
<feature type="domain" description="Ras-GEF" evidence="4">
    <location>
        <begin position="1317"/>
        <end position="1548"/>
    </location>
</feature>
<feature type="region of interest" description="Disordered" evidence="5">
    <location>
        <begin position="19"/>
        <end position="63"/>
    </location>
</feature>
<feature type="region of interest" description="Disordered" evidence="5">
    <location>
        <begin position="93"/>
        <end position="141"/>
    </location>
</feature>
<feature type="region of interest" description="Disordered" evidence="5">
    <location>
        <begin position="163"/>
        <end position="239"/>
    </location>
</feature>
<feature type="region of interest" description="Disordered" evidence="5">
    <location>
        <begin position="254"/>
        <end position="296"/>
    </location>
</feature>
<feature type="region of interest" description="Disordered" evidence="5">
    <location>
        <begin position="385"/>
        <end position="416"/>
    </location>
</feature>
<feature type="region of interest" description="Disordered" evidence="5">
    <location>
        <begin position="762"/>
        <end position="815"/>
    </location>
</feature>
<feature type="region of interest" description="Disordered" evidence="5">
    <location>
        <begin position="827"/>
        <end position="1101"/>
    </location>
</feature>
<feature type="region of interest" description="Disordered" evidence="5">
    <location>
        <begin position="1254"/>
        <end position="1279"/>
    </location>
</feature>
<feature type="compositionally biased region" description="Low complexity" evidence="5">
    <location>
        <begin position="25"/>
        <end position="54"/>
    </location>
</feature>
<feature type="compositionally biased region" description="Low complexity" evidence="5">
    <location>
        <begin position="96"/>
        <end position="141"/>
    </location>
</feature>
<feature type="compositionally biased region" description="Acidic residues" evidence="5">
    <location>
        <begin position="170"/>
        <end position="186"/>
    </location>
</feature>
<feature type="compositionally biased region" description="Low complexity" evidence="5">
    <location>
        <begin position="196"/>
        <end position="216"/>
    </location>
</feature>
<feature type="compositionally biased region" description="Polar residues" evidence="5">
    <location>
        <begin position="256"/>
        <end position="271"/>
    </location>
</feature>
<feature type="compositionally biased region" description="Low complexity" evidence="5">
    <location>
        <begin position="279"/>
        <end position="295"/>
    </location>
</feature>
<feature type="compositionally biased region" description="Low complexity" evidence="5">
    <location>
        <begin position="827"/>
        <end position="848"/>
    </location>
</feature>
<feature type="compositionally biased region" description="Gly residues" evidence="5">
    <location>
        <begin position="849"/>
        <end position="866"/>
    </location>
</feature>
<feature type="compositionally biased region" description="Low complexity" evidence="5">
    <location>
        <begin position="867"/>
        <end position="880"/>
    </location>
</feature>
<feature type="compositionally biased region" description="Low complexity" evidence="5">
    <location>
        <begin position="888"/>
        <end position="910"/>
    </location>
</feature>
<feature type="compositionally biased region" description="Polar residues" evidence="5">
    <location>
        <begin position="911"/>
        <end position="935"/>
    </location>
</feature>
<feature type="compositionally biased region" description="Low complexity" evidence="5">
    <location>
        <begin position="943"/>
        <end position="957"/>
    </location>
</feature>
<feature type="compositionally biased region" description="Low complexity" evidence="5">
    <location>
        <begin position="972"/>
        <end position="1053"/>
    </location>
</feature>
<feature type="compositionally biased region" description="Polar residues" evidence="5">
    <location>
        <begin position="1059"/>
        <end position="1076"/>
    </location>
</feature>
<feature type="compositionally biased region" description="Low complexity" evidence="5">
    <location>
        <begin position="1077"/>
        <end position="1101"/>
    </location>
</feature>
<feature type="compositionally biased region" description="Gly residues" evidence="5">
    <location>
        <begin position="1264"/>
        <end position="1279"/>
    </location>
</feature>
<dbReference type="EMBL" id="AY160096">
    <property type="protein sequence ID" value="AAN46876.1"/>
    <property type="molecule type" value="Genomic_DNA"/>
</dbReference>
<dbReference type="EMBL" id="AAFI02000007">
    <property type="protein sequence ID" value="EAL71450.1"/>
    <property type="molecule type" value="Genomic_DNA"/>
</dbReference>
<dbReference type="RefSeq" id="XP_645356.1">
    <property type="nucleotide sequence ID" value="XM_640264.1"/>
</dbReference>
<dbReference type="SMR" id="Q8ST25"/>
<dbReference type="FunCoup" id="Q8ST25">
    <property type="interactions" value="455"/>
</dbReference>
<dbReference type="PaxDb" id="44689-DDB0185195"/>
<dbReference type="EnsemblProtists" id="EAL71450">
    <property type="protein sequence ID" value="EAL71450"/>
    <property type="gene ID" value="DDB_G0272032"/>
</dbReference>
<dbReference type="GeneID" id="8618245"/>
<dbReference type="KEGG" id="ddi:DDB_G0272032"/>
<dbReference type="dictyBase" id="DDB_G0272032">
    <property type="gene designation" value="gefG"/>
</dbReference>
<dbReference type="VEuPathDB" id="AmoebaDB:DDB_G0272032"/>
<dbReference type="eggNOG" id="KOG3417">
    <property type="taxonomic scope" value="Eukaryota"/>
</dbReference>
<dbReference type="HOGENOM" id="CLU_246163_0_0_1"/>
<dbReference type="InParanoid" id="Q8ST25"/>
<dbReference type="OMA" id="HLAPNIR"/>
<dbReference type="Reactome" id="R-DDI-193648">
    <property type="pathway name" value="NRAGE signals death through JNK"/>
</dbReference>
<dbReference type="Reactome" id="R-DDI-9013148">
    <property type="pathway name" value="CDC42 GTPase cycle"/>
</dbReference>
<dbReference type="Reactome" id="R-DDI-9013149">
    <property type="pathway name" value="RAC1 GTPase cycle"/>
</dbReference>
<dbReference type="PRO" id="PR:Q8ST25"/>
<dbReference type="Proteomes" id="UP000002195">
    <property type="component" value="Chromosome 2"/>
</dbReference>
<dbReference type="GO" id="GO:0005886">
    <property type="term" value="C:plasma membrane"/>
    <property type="evidence" value="ECO:0000318"/>
    <property type="project" value="GO_Central"/>
</dbReference>
<dbReference type="GO" id="GO:0005085">
    <property type="term" value="F:guanyl-nucleotide exchange factor activity"/>
    <property type="evidence" value="ECO:0000318"/>
    <property type="project" value="GO_Central"/>
</dbReference>
<dbReference type="GO" id="GO:0007265">
    <property type="term" value="P:Ras protein signal transduction"/>
    <property type="evidence" value="ECO:0000318"/>
    <property type="project" value="GO_Central"/>
</dbReference>
<dbReference type="CDD" id="cd00155">
    <property type="entry name" value="RasGEF"/>
    <property type="match status" value="1"/>
</dbReference>
<dbReference type="CDD" id="cd06224">
    <property type="entry name" value="REM"/>
    <property type="match status" value="1"/>
</dbReference>
<dbReference type="Gene3D" id="1.20.1280.50">
    <property type="match status" value="2"/>
</dbReference>
<dbReference type="Gene3D" id="1.10.840.10">
    <property type="entry name" value="Ras guanine-nucleotide exchange factors catalytic domain"/>
    <property type="match status" value="1"/>
</dbReference>
<dbReference type="Gene3D" id="1.20.870.10">
    <property type="entry name" value="Son of sevenless (SoS) protein Chain: S domain 1"/>
    <property type="match status" value="1"/>
</dbReference>
<dbReference type="InterPro" id="IPR036047">
    <property type="entry name" value="F-box-like_dom_sf"/>
</dbReference>
<dbReference type="InterPro" id="IPR001810">
    <property type="entry name" value="F-box_dom"/>
</dbReference>
<dbReference type="InterPro" id="IPR008937">
    <property type="entry name" value="Ras-like_GEF"/>
</dbReference>
<dbReference type="InterPro" id="IPR000651">
    <property type="entry name" value="Ras-like_Gua-exchang_fac_N"/>
</dbReference>
<dbReference type="InterPro" id="IPR023578">
    <property type="entry name" value="Ras_GEF_dom_sf"/>
</dbReference>
<dbReference type="InterPro" id="IPR001895">
    <property type="entry name" value="RASGEF_cat_dom"/>
</dbReference>
<dbReference type="InterPro" id="IPR036964">
    <property type="entry name" value="RASGEF_cat_dom_sf"/>
</dbReference>
<dbReference type="PANTHER" id="PTHR23113">
    <property type="entry name" value="GUANINE NUCLEOTIDE EXCHANGE FACTOR"/>
    <property type="match status" value="1"/>
</dbReference>
<dbReference type="PANTHER" id="PTHR23113:SF201">
    <property type="entry name" value="RAS GUANINE NUCLEOTIDE EXCHANGE FACTOR G"/>
    <property type="match status" value="1"/>
</dbReference>
<dbReference type="Pfam" id="PF12937">
    <property type="entry name" value="F-box-like"/>
    <property type="match status" value="2"/>
</dbReference>
<dbReference type="Pfam" id="PF00617">
    <property type="entry name" value="RasGEF"/>
    <property type="match status" value="1"/>
</dbReference>
<dbReference type="Pfam" id="PF00618">
    <property type="entry name" value="RasGEF_N"/>
    <property type="match status" value="1"/>
</dbReference>
<dbReference type="SMART" id="SM00256">
    <property type="entry name" value="FBOX"/>
    <property type="match status" value="2"/>
</dbReference>
<dbReference type="SMART" id="SM00147">
    <property type="entry name" value="RasGEF"/>
    <property type="match status" value="1"/>
</dbReference>
<dbReference type="SUPFAM" id="SSF81383">
    <property type="entry name" value="F-box domain"/>
    <property type="match status" value="2"/>
</dbReference>
<dbReference type="SUPFAM" id="SSF48366">
    <property type="entry name" value="Ras GEF"/>
    <property type="match status" value="1"/>
</dbReference>
<dbReference type="PROSITE" id="PS50181">
    <property type="entry name" value="FBOX"/>
    <property type="match status" value="1"/>
</dbReference>
<dbReference type="PROSITE" id="PS50009">
    <property type="entry name" value="RASGEF_CAT"/>
    <property type="match status" value="1"/>
</dbReference>
<dbReference type="PROSITE" id="PS50212">
    <property type="entry name" value="RASGEF_NTER"/>
    <property type="match status" value="1"/>
</dbReference>
<accession>Q8ST25</accession>
<accession>Q55AB0</accession>
<evidence type="ECO:0000250" key="1"/>
<evidence type="ECO:0000255" key="2">
    <source>
        <dbReference type="PROSITE-ProRule" id="PRU00080"/>
    </source>
</evidence>
<evidence type="ECO:0000255" key="3">
    <source>
        <dbReference type="PROSITE-ProRule" id="PRU00135"/>
    </source>
</evidence>
<evidence type="ECO:0000255" key="4">
    <source>
        <dbReference type="PROSITE-ProRule" id="PRU00168"/>
    </source>
</evidence>
<evidence type="ECO:0000256" key="5">
    <source>
        <dbReference type="SAM" id="MobiDB-lite"/>
    </source>
</evidence>
<evidence type="ECO:0000269" key="6">
    <source>
    </source>
</evidence>
<reference key="1">
    <citation type="journal article" date="2005" name="Genome Biol.">
        <title>The Dictyostelium genome encodes numerous RasGEFs with multiple biological roles.</title>
        <authorList>
            <person name="Wilkins A."/>
            <person name="Szafranski K."/>
            <person name="Fraser D.J."/>
            <person name="Bakthavatsalam D."/>
            <person name="Mueller R."/>
            <person name="Fisher P.R."/>
            <person name="Gloeckner G."/>
            <person name="Eichinger L."/>
            <person name="Noegel A.A."/>
            <person name="Insall R.H."/>
        </authorList>
    </citation>
    <scope>NUCLEOTIDE SEQUENCE [GENOMIC DNA]</scope>
    <scope>DEVELOPMENTAL STAGE</scope>
    <source>
        <strain>AX4</strain>
    </source>
</reference>
<reference key="2">
    <citation type="journal article" date="2002" name="Nature">
        <title>Sequence and analysis of chromosome 2 of Dictyostelium discoideum.</title>
        <authorList>
            <person name="Gloeckner G."/>
            <person name="Eichinger L."/>
            <person name="Szafranski K."/>
            <person name="Pachebat J.A."/>
            <person name="Bankier A.T."/>
            <person name="Dear P.H."/>
            <person name="Lehmann R."/>
            <person name="Baumgart C."/>
            <person name="Parra G."/>
            <person name="Abril J.F."/>
            <person name="Guigo R."/>
            <person name="Kumpf K."/>
            <person name="Tunggal B."/>
            <person name="Cox E.C."/>
            <person name="Quail M.A."/>
            <person name="Platzer M."/>
            <person name="Rosenthal A."/>
            <person name="Noegel A.A."/>
        </authorList>
    </citation>
    <scope>NUCLEOTIDE SEQUENCE [LARGE SCALE GENOMIC DNA]</scope>
    <source>
        <strain>AX4</strain>
    </source>
</reference>
<reference key="3">
    <citation type="journal article" date="2005" name="Nature">
        <title>The genome of the social amoeba Dictyostelium discoideum.</title>
        <authorList>
            <person name="Eichinger L."/>
            <person name="Pachebat J.A."/>
            <person name="Gloeckner G."/>
            <person name="Rajandream M.A."/>
            <person name="Sucgang R."/>
            <person name="Berriman M."/>
            <person name="Song J."/>
            <person name="Olsen R."/>
            <person name="Szafranski K."/>
            <person name="Xu Q."/>
            <person name="Tunggal B."/>
            <person name="Kummerfeld S."/>
            <person name="Madera M."/>
            <person name="Konfortov B.A."/>
            <person name="Rivero F."/>
            <person name="Bankier A.T."/>
            <person name="Lehmann R."/>
            <person name="Hamlin N."/>
            <person name="Davies R."/>
            <person name="Gaudet P."/>
            <person name="Fey P."/>
            <person name="Pilcher K."/>
            <person name="Chen G."/>
            <person name="Saunders D."/>
            <person name="Sodergren E.J."/>
            <person name="Davis P."/>
            <person name="Kerhornou A."/>
            <person name="Nie X."/>
            <person name="Hall N."/>
            <person name="Anjard C."/>
            <person name="Hemphill L."/>
            <person name="Bason N."/>
            <person name="Farbrother P."/>
            <person name="Desany B."/>
            <person name="Just E."/>
            <person name="Morio T."/>
            <person name="Rost R."/>
            <person name="Churcher C.M."/>
            <person name="Cooper J."/>
            <person name="Haydock S."/>
            <person name="van Driessche N."/>
            <person name="Cronin A."/>
            <person name="Goodhead I."/>
            <person name="Muzny D.M."/>
            <person name="Mourier T."/>
            <person name="Pain A."/>
            <person name="Lu M."/>
            <person name="Harper D."/>
            <person name="Lindsay R."/>
            <person name="Hauser H."/>
            <person name="James K.D."/>
            <person name="Quiles M."/>
            <person name="Madan Babu M."/>
            <person name="Saito T."/>
            <person name="Buchrieser C."/>
            <person name="Wardroper A."/>
            <person name="Felder M."/>
            <person name="Thangavelu M."/>
            <person name="Johnson D."/>
            <person name="Knights A."/>
            <person name="Loulseged H."/>
            <person name="Mungall K.L."/>
            <person name="Oliver K."/>
            <person name="Price C."/>
            <person name="Quail M.A."/>
            <person name="Urushihara H."/>
            <person name="Hernandez J."/>
            <person name="Rabbinowitsch E."/>
            <person name="Steffen D."/>
            <person name="Sanders M."/>
            <person name="Ma J."/>
            <person name="Kohara Y."/>
            <person name="Sharp S."/>
            <person name="Simmonds M.N."/>
            <person name="Spiegler S."/>
            <person name="Tivey A."/>
            <person name="Sugano S."/>
            <person name="White B."/>
            <person name="Walker D."/>
            <person name="Woodward J.R."/>
            <person name="Winckler T."/>
            <person name="Tanaka Y."/>
            <person name="Shaulsky G."/>
            <person name="Schleicher M."/>
            <person name="Weinstock G.M."/>
            <person name="Rosenthal A."/>
            <person name="Cox E.C."/>
            <person name="Chisholm R.L."/>
            <person name="Gibbs R.A."/>
            <person name="Loomis W.F."/>
            <person name="Platzer M."/>
            <person name="Kay R.R."/>
            <person name="Williams J.G."/>
            <person name="Dear P.H."/>
            <person name="Noegel A.A."/>
            <person name="Barrell B.G."/>
            <person name="Kuspa A."/>
        </authorList>
    </citation>
    <scope>NUCLEOTIDE SEQUENCE [LARGE SCALE GENOMIC DNA]</scope>
    <source>
        <strain>AX4</strain>
    </source>
</reference>
<sequence>MDKINNENDKINISIKAPIGNIEDNNNNSNNNSNNNSVSNSNNNSSISINSGSNTPTNSKNRGIKIFDLDDPFTSKRLSGFFSPESLAELSKLQLNDTDNNDNLTTTTTTTTTTTTTTTTTNTITSKNNSPNTSPLLSSTTISSITSGAPIKKRFERIPSGLSHVTNHYDDDDDDESSSSEEDFDSTELVCRPNKTSSTTATTTTTTTSVSPLTSSFVMRRPSSPSPPPSCSSPTLSPSLSATRRLSGNLVKVATDSDNQSLEPCNNKTIVDNNDNDNDNNNNHNNNNNNNNNNNSTEDISIKPICNKTFLDLDEKIYLKIFGYLFAEDLCSINRVSKHLCNIINNQQLWKDLFSIYIKIYSEPSDIYIWDEDLYSIYNNNNNNNNNNNNNNNNNNNNNNSNISNNNNNINNSNGNNNPYFTGGVSNSSIGAIGGSIGSSAGSNIALKLRSNTSIPIIERGRSNTIAMPTPTFINEINMLNSNNSVNNNNNISNNNTINSNNAGVIINPSGTVNNNINNINSSNSINSSSSSGSNINLSNNNSSTIHGSYISSNLILNSVLRKFTPTTSVPSTNEVTDFIESCHHFPSKLLICKLVQRYLVPREFQRHLSDIDWVKMVERPIQLRVGKLLKKVIDQKKVNFDYGTMLILRSFIRGYIQSTSDMAKGLIVGLQKKQVLKVFDISRVSDILLIKIFRNLDSIKDLSVCQRVSKRWNKAIAISSLWEQLYLNYRKKLHHEGDINIWDDPSLHTVEYLYEFFDQIQPSPQQQQQQQQQQQQQQQQQQQPQLQTNESNNNNEDIKQNDNNNNNSNNNGLNNLQKLIEENLEGSNLSNGGNSGSSFSPFNPLSGSNGGSSFGPFGSGGGGGSNSNIGGSSNQLNSSSGGGGSGFLAMASGGSSVSSVTSTPSTISTNCTPTGGSTTNSPNFQSPMVSSSTVLPPPIPFSPNLSSPRSMSISLSSPPPLPNKPPELKLPDSSLSPNSSFNNNLSSTSISIPSTPTTTPSSSLLTFIPPNTTSTTTTTSTTNITSTTMPISAATTTTTTTTSTTSTIIQPIQPIPPVNNNGSQSDLSKISDLNANPNTTTTTTTNTIESSSSSSSITNNNENIIEPIKSPQPSMINVQKLMNLNQLVDKLTSITVATEISEVNACLATYRTFISTSQLVEKLFQRYHIPRASNIKSILDWKQRIETPIQVKVCKVFKKLIDDHFDDFNGTIIELFKVFLLHIIDKQSPLTNHLIRSFSRKLSGENGSTGSVIGITGGKSSRKGGGSGSGSGSGGGSGSSIIGGAVGGTIKASQSKIGRMMSVRKAQQFNDIISLPAEEIAKQLTLIEFEIFGKIQSSEFLNQSWAKEKTFHLAPNIRASIDRFNTVTKWVCTIILKEEKIRTRTKIMSKLLKVAKNLRSYSNFHTLMAILSGLNEIHIYRLKFTQQELKPKIQKISSELQTLMSVEGNHEAYRTELSNVDPKQSCIPYLGVYLKDLTFIQDDTNKKGDGINIKQSLNLYNILKTIQNFQKNPYSFEEFPKIKETLLNLPVWTEDNLYRVSMQREPRNCKRSDLI</sequence>
<name>GEFG_DICDI</name>
<proteinExistence type="evidence at transcript level"/>
<organism>
    <name type="scientific">Dictyostelium discoideum</name>
    <name type="common">Social amoeba</name>
    <dbReference type="NCBI Taxonomy" id="44689"/>
    <lineage>
        <taxon>Eukaryota</taxon>
        <taxon>Amoebozoa</taxon>
        <taxon>Evosea</taxon>
        <taxon>Eumycetozoa</taxon>
        <taxon>Dictyostelia</taxon>
        <taxon>Dictyosteliales</taxon>
        <taxon>Dictyosteliaceae</taxon>
        <taxon>Dictyostelium</taxon>
    </lineage>
</organism>
<comment type="function">
    <text evidence="1">Promotes the exchange of Ras-bound GDP by GTP.</text>
</comment>
<comment type="developmental stage">
    <text evidence="6">Faintly expressed between 12 and 14 hours of development.</text>
</comment>
<keyword id="KW-0344">Guanine-nucleotide releasing factor</keyword>
<keyword id="KW-1185">Reference proteome</keyword>
<keyword id="KW-0677">Repeat</keyword>
<gene>
    <name type="primary">gefG</name>
    <name type="synonym">rasGEFG</name>
    <name type="ORF">DDB_G0272032</name>
</gene>